<feature type="chain" id="PRO_1000203353" description="Phosphoglycerate kinase">
    <location>
        <begin position="1"/>
        <end position="396"/>
    </location>
</feature>
<feature type="binding site" evidence="1">
    <location>
        <begin position="22"/>
        <end position="24"/>
    </location>
    <ligand>
        <name>substrate</name>
    </ligand>
</feature>
<feature type="binding site" evidence="1">
    <location>
        <position position="37"/>
    </location>
    <ligand>
        <name>substrate</name>
    </ligand>
</feature>
<feature type="binding site" evidence="1">
    <location>
        <begin position="60"/>
        <end position="63"/>
    </location>
    <ligand>
        <name>substrate</name>
    </ligand>
</feature>
<feature type="binding site" evidence="1">
    <location>
        <position position="118"/>
    </location>
    <ligand>
        <name>substrate</name>
    </ligand>
</feature>
<feature type="binding site" evidence="1">
    <location>
        <position position="151"/>
    </location>
    <ligand>
        <name>substrate</name>
    </ligand>
</feature>
<feature type="binding site" evidence="1">
    <location>
        <position position="201"/>
    </location>
    <ligand>
        <name>ATP</name>
        <dbReference type="ChEBI" id="CHEBI:30616"/>
    </ligand>
</feature>
<feature type="binding site" evidence="1">
    <location>
        <position position="323"/>
    </location>
    <ligand>
        <name>ATP</name>
        <dbReference type="ChEBI" id="CHEBI:30616"/>
    </ligand>
</feature>
<feature type="binding site" evidence="1">
    <location>
        <begin position="353"/>
        <end position="356"/>
    </location>
    <ligand>
        <name>ATP</name>
        <dbReference type="ChEBI" id="CHEBI:30616"/>
    </ligand>
</feature>
<dbReference type="EC" id="2.7.2.3" evidence="1"/>
<dbReference type="EMBL" id="CP000781">
    <property type="protein sequence ID" value="ABS68306.1"/>
    <property type="molecule type" value="Genomic_DNA"/>
</dbReference>
<dbReference type="SMR" id="A7IJW3"/>
<dbReference type="STRING" id="78245.Xaut_3076"/>
<dbReference type="KEGG" id="xau:Xaut_3076"/>
<dbReference type="eggNOG" id="COG0126">
    <property type="taxonomic scope" value="Bacteria"/>
</dbReference>
<dbReference type="HOGENOM" id="CLU_025427_0_2_5"/>
<dbReference type="OrthoDB" id="9808460at2"/>
<dbReference type="PhylomeDB" id="A7IJW3"/>
<dbReference type="UniPathway" id="UPA00109">
    <property type="reaction ID" value="UER00185"/>
</dbReference>
<dbReference type="Proteomes" id="UP000002417">
    <property type="component" value="Chromosome"/>
</dbReference>
<dbReference type="GO" id="GO:0005829">
    <property type="term" value="C:cytosol"/>
    <property type="evidence" value="ECO:0007669"/>
    <property type="project" value="TreeGrafter"/>
</dbReference>
<dbReference type="GO" id="GO:0043531">
    <property type="term" value="F:ADP binding"/>
    <property type="evidence" value="ECO:0007669"/>
    <property type="project" value="TreeGrafter"/>
</dbReference>
<dbReference type="GO" id="GO:0005524">
    <property type="term" value="F:ATP binding"/>
    <property type="evidence" value="ECO:0007669"/>
    <property type="project" value="UniProtKB-KW"/>
</dbReference>
<dbReference type="GO" id="GO:0004618">
    <property type="term" value="F:phosphoglycerate kinase activity"/>
    <property type="evidence" value="ECO:0007669"/>
    <property type="project" value="UniProtKB-UniRule"/>
</dbReference>
<dbReference type="GO" id="GO:0006094">
    <property type="term" value="P:gluconeogenesis"/>
    <property type="evidence" value="ECO:0007669"/>
    <property type="project" value="TreeGrafter"/>
</dbReference>
<dbReference type="GO" id="GO:0006096">
    <property type="term" value="P:glycolytic process"/>
    <property type="evidence" value="ECO:0007669"/>
    <property type="project" value="UniProtKB-UniRule"/>
</dbReference>
<dbReference type="CDD" id="cd00318">
    <property type="entry name" value="Phosphoglycerate_kinase"/>
    <property type="match status" value="1"/>
</dbReference>
<dbReference type="FunFam" id="3.40.50.1260:FF:000006">
    <property type="entry name" value="Phosphoglycerate kinase"/>
    <property type="match status" value="1"/>
</dbReference>
<dbReference type="FunFam" id="3.40.50.1260:FF:000031">
    <property type="entry name" value="Phosphoglycerate kinase 1"/>
    <property type="match status" value="1"/>
</dbReference>
<dbReference type="Gene3D" id="3.40.50.1260">
    <property type="entry name" value="Phosphoglycerate kinase, N-terminal domain"/>
    <property type="match status" value="2"/>
</dbReference>
<dbReference type="HAMAP" id="MF_00145">
    <property type="entry name" value="Phosphoglyc_kinase"/>
    <property type="match status" value="1"/>
</dbReference>
<dbReference type="InterPro" id="IPR001576">
    <property type="entry name" value="Phosphoglycerate_kinase"/>
</dbReference>
<dbReference type="InterPro" id="IPR015911">
    <property type="entry name" value="Phosphoglycerate_kinase_CS"/>
</dbReference>
<dbReference type="InterPro" id="IPR015824">
    <property type="entry name" value="Phosphoglycerate_kinase_N"/>
</dbReference>
<dbReference type="InterPro" id="IPR036043">
    <property type="entry name" value="Phosphoglycerate_kinase_sf"/>
</dbReference>
<dbReference type="PANTHER" id="PTHR11406">
    <property type="entry name" value="PHOSPHOGLYCERATE KINASE"/>
    <property type="match status" value="1"/>
</dbReference>
<dbReference type="PANTHER" id="PTHR11406:SF23">
    <property type="entry name" value="PHOSPHOGLYCERATE KINASE 1, CHLOROPLASTIC-RELATED"/>
    <property type="match status" value="1"/>
</dbReference>
<dbReference type="Pfam" id="PF00162">
    <property type="entry name" value="PGK"/>
    <property type="match status" value="1"/>
</dbReference>
<dbReference type="PIRSF" id="PIRSF000724">
    <property type="entry name" value="Pgk"/>
    <property type="match status" value="1"/>
</dbReference>
<dbReference type="PRINTS" id="PR00477">
    <property type="entry name" value="PHGLYCKINASE"/>
</dbReference>
<dbReference type="SUPFAM" id="SSF53748">
    <property type="entry name" value="Phosphoglycerate kinase"/>
    <property type="match status" value="1"/>
</dbReference>
<dbReference type="PROSITE" id="PS00111">
    <property type="entry name" value="PGLYCERATE_KINASE"/>
    <property type="match status" value="1"/>
</dbReference>
<comment type="catalytic activity">
    <reaction evidence="1">
        <text>(2R)-3-phosphoglycerate + ATP = (2R)-3-phospho-glyceroyl phosphate + ADP</text>
        <dbReference type="Rhea" id="RHEA:14801"/>
        <dbReference type="ChEBI" id="CHEBI:30616"/>
        <dbReference type="ChEBI" id="CHEBI:57604"/>
        <dbReference type="ChEBI" id="CHEBI:58272"/>
        <dbReference type="ChEBI" id="CHEBI:456216"/>
        <dbReference type="EC" id="2.7.2.3"/>
    </reaction>
</comment>
<comment type="pathway">
    <text evidence="1">Carbohydrate degradation; glycolysis; pyruvate from D-glyceraldehyde 3-phosphate: step 2/5.</text>
</comment>
<comment type="subunit">
    <text evidence="1">Monomer.</text>
</comment>
<comment type="subcellular location">
    <subcellularLocation>
        <location evidence="1">Cytoplasm</location>
    </subcellularLocation>
</comment>
<comment type="similarity">
    <text evidence="1">Belongs to the phosphoglycerate kinase family.</text>
</comment>
<organism>
    <name type="scientific">Xanthobacter autotrophicus (strain ATCC BAA-1158 / Py2)</name>
    <dbReference type="NCBI Taxonomy" id="78245"/>
    <lineage>
        <taxon>Bacteria</taxon>
        <taxon>Pseudomonadati</taxon>
        <taxon>Pseudomonadota</taxon>
        <taxon>Alphaproteobacteria</taxon>
        <taxon>Hyphomicrobiales</taxon>
        <taxon>Xanthobacteraceae</taxon>
        <taxon>Xanthobacter</taxon>
    </lineage>
</organism>
<sequence>MTAFRTLDDADLADKRVLVRVDLNVPMESGRVTDETRLKAILPTIRTITDKGGKAVLLAHFGRPKGRDESQSLAPVAKALEGQLGRKVAFASDCVGEEASSAISRLAAGEVIVLENTRFHAGEEKNAPDFVEALASLGDIYVNDAFSAAHRAHASTEGLARKLPAYAGRSMESELAALTKALEAPVRPVLAVVGGSKVSSKLELLGNLVKKVDILVIAGGMANTFLAALGKKVGKSLCEHDLADTAREILEKAKAAGCEIVLPVDAVVAKEFKANAANRVVSVDEVGDDEMILDAGPETVAVVAQKLDGAKTVVWNGPFGAFEMTPFDAATVAVARDVGKRTRAGTLLSVAGGGDTVAALNHAGVAGDFSYVSTAGGAFLEWLEGKALPGVEALRR</sequence>
<name>PGK_XANP2</name>
<gene>
    <name evidence="1" type="primary">pgk</name>
    <name type="ordered locus">Xaut_3076</name>
</gene>
<accession>A7IJW3</accession>
<evidence type="ECO:0000255" key="1">
    <source>
        <dbReference type="HAMAP-Rule" id="MF_00145"/>
    </source>
</evidence>
<protein>
    <recommendedName>
        <fullName evidence="1">Phosphoglycerate kinase</fullName>
        <ecNumber evidence="1">2.7.2.3</ecNumber>
    </recommendedName>
</protein>
<reference key="1">
    <citation type="submission" date="2007-07" db="EMBL/GenBank/DDBJ databases">
        <title>Complete sequence of chromosome of Xanthobacter autotrophicus Py2.</title>
        <authorList>
            <consortium name="US DOE Joint Genome Institute"/>
            <person name="Copeland A."/>
            <person name="Lucas S."/>
            <person name="Lapidus A."/>
            <person name="Barry K."/>
            <person name="Glavina del Rio T."/>
            <person name="Hammon N."/>
            <person name="Israni S."/>
            <person name="Dalin E."/>
            <person name="Tice H."/>
            <person name="Pitluck S."/>
            <person name="Sims D."/>
            <person name="Brettin T."/>
            <person name="Bruce D."/>
            <person name="Detter J.C."/>
            <person name="Han C."/>
            <person name="Tapia R."/>
            <person name="Brainard J."/>
            <person name="Schmutz J."/>
            <person name="Larimer F."/>
            <person name="Land M."/>
            <person name="Hauser L."/>
            <person name="Kyrpides N."/>
            <person name="Kim E."/>
            <person name="Ensigns S.A."/>
            <person name="Richardson P."/>
        </authorList>
    </citation>
    <scope>NUCLEOTIDE SEQUENCE [LARGE SCALE GENOMIC DNA]</scope>
    <source>
        <strain>ATCC BAA-1158 / Py2</strain>
    </source>
</reference>
<proteinExistence type="inferred from homology"/>
<keyword id="KW-0067">ATP-binding</keyword>
<keyword id="KW-0963">Cytoplasm</keyword>
<keyword id="KW-0324">Glycolysis</keyword>
<keyword id="KW-0418">Kinase</keyword>
<keyword id="KW-0547">Nucleotide-binding</keyword>
<keyword id="KW-1185">Reference proteome</keyword>
<keyword id="KW-0808">Transferase</keyword>